<keyword id="KW-0002">3D-structure</keyword>
<comment type="function">
    <text evidence="1 2">Immunity protein component of a toxin-immunity protein module, which functions as a cellular contact-dependent growth inhibition (CDI) system. CDI modules allow bacteria to communicate with and inhibit the growth of closely related neighboring bacteria in a contact-dependent fashion. Neutralizes the toxic activity of cognate toxin CdiA (C-terminal 160 residue CT fragment) upon expression in E.coli. Does not inhibit toxic activity of CdiA from other strains of B.pseudomallei.</text>
</comment>
<comment type="subunit">
    <text evidence="1 2">Specifically interacts with cognate toxin CdiA, which inhibits the toxin.</text>
</comment>
<evidence type="ECO:0000269" key="1">
    <source>
    </source>
</evidence>
<evidence type="ECO:0000269" key="2">
    <source>
    </source>
</evidence>
<evidence type="ECO:0007744" key="3">
    <source>
        <dbReference type="PDB" id="5J4A"/>
    </source>
</evidence>
<evidence type="ECO:0007829" key="4">
    <source>
        <dbReference type="PDB" id="5J4A"/>
    </source>
</evidence>
<dbReference type="EMBL" id="JQ423914">
    <property type="protein sequence ID" value="AFG17281.1"/>
    <property type="molecule type" value="Genomic_DNA"/>
</dbReference>
<dbReference type="PDB" id="5J4A">
    <property type="method" value="X-ray"/>
    <property type="resolution" value="2.00 A"/>
    <property type="chains" value="B/D=1-109"/>
</dbReference>
<dbReference type="PDBsum" id="5J4A"/>
<dbReference type="SMR" id="H9T8G7"/>
<dbReference type="CDD" id="cd20690">
    <property type="entry name" value="CdiI_BpE479-like"/>
    <property type="match status" value="1"/>
</dbReference>
<accession>H9T8G7</accession>
<proteinExistence type="evidence at protein level"/>
<sequence>MAGSIVISKEVRVPVSTSQFDYLVSRIGDQFHSSDMWIKDEVYLPMEEGGMSFISTESLNSSGLSIFLATVMRARAASQAEESFPLYENVWNQLVEKLRQDARLGVSGN</sequence>
<gene>
    <name type="primary">cdiI</name>
</gene>
<feature type="chain" id="PRO_0000429695" description="Immunity protein CdiI">
    <location>
        <begin position="1"/>
        <end position="109"/>
    </location>
</feature>
<feature type="strand" evidence="4">
    <location>
        <begin position="3"/>
        <end position="8"/>
    </location>
</feature>
<feature type="strand" evidence="4">
    <location>
        <begin position="11"/>
        <end position="15"/>
    </location>
</feature>
<feature type="helix" evidence="4">
    <location>
        <begin position="17"/>
        <end position="28"/>
    </location>
</feature>
<feature type="helix" evidence="4">
    <location>
        <begin position="33"/>
        <end position="35"/>
    </location>
</feature>
<feature type="helix" evidence="4">
    <location>
        <begin position="36"/>
        <end position="47"/>
    </location>
</feature>
<feature type="strand" evidence="4">
    <location>
        <begin position="52"/>
        <end position="55"/>
    </location>
</feature>
<feature type="helix" evidence="4">
    <location>
        <begin position="61"/>
        <end position="79"/>
    </location>
</feature>
<feature type="helix" evidence="4">
    <location>
        <begin position="84"/>
        <end position="99"/>
    </location>
</feature>
<feature type="helix" evidence="4">
    <location>
        <begin position="102"/>
        <end position="104"/>
    </location>
</feature>
<reference key="1">
    <citation type="journal article" date="2008" name="PLoS Negl. Trop. Dis.">
        <title>Genetic diversity and microevolution of Burkholderia pseudomallei in the environment.</title>
        <authorList>
            <person name="Chantratita N."/>
            <person name="Wuthiekanun V."/>
            <person name="Limmathurotsakul D."/>
            <person name="Vesaratchavest M."/>
            <person name="Thanwisai A."/>
            <person name="Amornchai P."/>
            <person name="Tumapa S."/>
            <person name="Feil E.J."/>
            <person name="Day N.P."/>
            <person name="Peacock S.J."/>
        </authorList>
    </citation>
    <scope>NUCLEOTIDE SEQUENCE [GENOMIC DNA]</scope>
    <source>
        <strain>E479</strain>
    </source>
</reference>
<reference key="2">
    <citation type="journal article" date="2012" name="Mol. Microbiol.">
        <title>The toxin/immunity network of Burkholderia pseudomallei contact-dependent growth inhibition (CDI) systems.</title>
        <authorList>
            <person name="Nikolakakis K."/>
            <person name="Amber S."/>
            <person name="Wilbur J.S."/>
            <person name="Diner E.J."/>
            <person name="Aoki S.K."/>
            <person name="Poole S.J."/>
            <person name="Tuanyok A."/>
            <person name="Keim P.S."/>
            <person name="Peacock S."/>
            <person name="Hayes C.S."/>
            <person name="Low D.A."/>
        </authorList>
    </citation>
    <scope>FUNCTION</scope>
    <scope>INTERACTION WITH CDIA</scope>
    <scope>SUBUNIT</scope>
    <source>
        <strain>E479</strain>
    </source>
</reference>
<reference evidence="3" key="3">
    <citation type="journal article" date="2016" name="J. Biol. Chem.">
        <title>Functional diversity of cytotoxic tRNase/immunity protein complexes from Burkholderia pseudomallei.</title>
        <authorList>
            <person name="Johnson P.M."/>
            <person name="Gucinski G.C."/>
            <person name="Garza-Sanchez F."/>
            <person name="Wong T."/>
            <person name="Hung L.W."/>
            <person name="Hayes C.S."/>
            <person name="Goulding C.W."/>
        </authorList>
    </citation>
    <scope>X-RAY CRYSTALLOGRAPHY (2.00 ANGSTROMS) IN COMPLEX WITH CDIA-CT-E479</scope>
    <scope>FUNCTION</scope>
    <scope>SUBUNIT</scope>
    <source>
        <strain>E479</strain>
    </source>
</reference>
<protein>
    <recommendedName>
        <fullName>Immunity protein CdiI</fullName>
    </recommendedName>
    <alternativeName>
        <fullName>CdiI-E479</fullName>
    </alternativeName>
</protein>
<name>CDII9_BURPE</name>
<organism>
    <name type="scientific">Burkholderia pseudomallei</name>
    <name type="common">Pseudomonas pseudomallei</name>
    <dbReference type="NCBI Taxonomy" id="28450"/>
    <lineage>
        <taxon>Bacteria</taxon>
        <taxon>Pseudomonadati</taxon>
        <taxon>Pseudomonadota</taxon>
        <taxon>Betaproteobacteria</taxon>
        <taxon>Burkholderiales</taxon>
        <taxon>Burkholderiaceae</taxon>
        <taxon>Burkholderia</taxon>
        <taxon>pseudomallei group</taxon>
    </lineage>
</organism>